<reference key="1">
    <citation type="journal article" date="2010" name="PLoS Genet.">
        <title>Genome sequence of the plant growth promoting endophytic bacterium Enterobacter sp. 638.</title>
        <authorList>
            <person name="Taghavi S."/>
            <person name="van der Lelie D."/>
            <person name="Hoffman A."/>
            <person name="Zhang Y.B."/>
            <person name="Walla M.D."/>
            <person name="Vangronsveld J."/>
            <person name="Newman L."/>
            <person name="Monchy S."/>
        </authorList>
    </citation>
    <scope>NUCLEOTIDE SEQUENCE [LARGE SCALE GENOMIC DNA]</scope>
    <source>
        <strain>638</strain>
    </source>
</reference>
<proteinExistence type="inferred from homology"/>
<gene>
    <name type="ordered locus">Ent638_0667</name>
</gene>
<accession>A4W6M4</accession>
<organism>
    <name type="scientific">Enterobacter sp. (strain 638)</name>
    <dbReference type="NCBI Taxonomy" id="399742"/>
    <lineage>
        <taxon>Bacteria</taxon>
        <taxon>Pseudomonadati</taxon>
        <taxon>Pseudomonadota</taxon>
        <taxon>Gammaproteobacteria</taxon>
        <taxon>Enterobacterales</taxon>
        <taxon>Enterobacteriaceae</taxon>
        <taxon>Enterobacter</taxon>
    </lineage>
</organism>
<feature type="chain" id="PRO_1000064360" description="UPF0231 protein Ent638_0667">
    <location>
        <begin position="1"/>
        <end position="120"/>
    </location>
</feature>
<comment type="similarity">
    <text evidence="1">Belongs to the UPF0231 family.</text>
</comment>
<name>Y667_ENT38</name>
<dbReference type="EMBL" id="CP000653">
    <property type="protein sequence ID" value="ABP59354.1"/>
    <property type="molecule type" value="Genomic_DNA"/>
</dbReference>
<dbReference type="RefSeq" id="WP_012016075.1">
    <property type="nucleotide sequence ID" value="NC_009436.1"/>
</dbReference>
<dbReference type="STRING" id="399742.Ent638_0667"/>
<dbReference type="KEGG" id="ent:Ent638_0667"/>
<dbReference type="eggNOG" id="COG3112">
    <property type="taxonomic scope" value="Bacteria"/>
</dbReference>
<dbReference type="HOGENOM" id="CLU_139226_0_0_6"/>
<dbReference type="OrthoDB" id="5739292at2"/>
<dbReference type="Proteomes" id="UP000000230">
    <property type="component" value="Chromosome"/>
</dbReference>
<dbReference type="HAMAP" id="MF_01053">
    <property type="entry name" value="UPF0231"/>
    <property type="match status" value="1"/>
</dbReference>
<dbReference type="InterPro" id="IPR008249">
    <property type="entry name" value="UPF0231"/>
</dbReference>
<dbReference type="NCBIfam" id="NF003574">
    <property type="entry name" value="PRK05248.1-1"/>
    <property type="match status" value="1"/>
</dbReference>
<dbReference type="NCBIfam" id="NF003576">
    <property type="entry name" value="PRK05248.1-3"/>
    <property type="match status" value="1"/>
</dbReference>
<dbReference type="Pfam" id="PF06062">
    <property type="entry name" value="UPF0231"/>
    <property type="match status" value="1"/>
</dbReference>
<dbReference type="PIRSF" id="PIRSF006287">
    <property type="entry name" value="UCP006287"/>
    <property type="match status" value="1"/>
</dbReference>
<protein>
    <recommendedName>
        <fullName evidence="1">UPF0231 protein Ent638_0667</fullName>
    </recommendedName>
</protein>
<sequence>MDYEFLRDITGGVKVRMSMGHEVVGHWFNEEVKENLALLDEVEQAARTIKGSERSWQRIGHEYTLWMDGEEVMVRANQMEISGDEMEEGMSYYDEESFSLCGVEDFLQVVKAYREFMQQK</sequence>
<evidence type="ECO:0000255" key="1">
    <source>
        <dbReference type="HAMAP-Rule" id="MF_01053"/>
    </source>
</evidence>